<feature type="chain" id="PRO_1000195738" description="Large ribosomal subunit protein uL11">
    <location>
        <begin position="1"/>
        <end position="141"/>
    </location>
</feature>
<organism>
    <name type="scientific">Thermosipho africanus (strain TCF52B)</name>
    <dbReference type="NCBI Taxonomy" id="484019"/>
    <lineage>
        <taxon>Bacteria</taxon>
        <taxon>Thermotogati</taxon>
        <taxon>Thermotogota</taxon>
        <taxon>Thermotogae</taxon>
        <taxon>Thermotogales</taxon>
        <taxon>Fervidobacteriaceae</taxon>
        <taxon>Thermosipho</taxon>
    </lineage>
</organism>
<sequence>MAKKVVAQVRLQLEAGKATPAPPVGPALGQRGVNLMEFCKKFNAATADKAGMIIPVIITVYEDRSFTFITKTPPASFLLKKAAKLNSGSQEPKRKMVGKVTRDQIKEIAEIKMKDLNANDIEAAMKIIEGTAKSMGIEVVD</sequence>
<comment type="function">
    <text evidence="1">Forms part of the ribosomal stalk which helps the ribosome interact with GTP-bound translation factors.</text>
</comment>
<comment type="subunit">
    <text evidence="1">Part of the ribosomal stalk of the 50S ribosomal subunit. Interacts with L10 and the large rRNA to form the base of the stalk. L10 forms an elongated spine to which L12 dimers bind in a sequential fashion forming a multimeric L10(L12)X complex.</text>
</comment>
<comment type="PTM">
    <text evidence="1">One or more lysine residues are methylated.</text>
</comment>
<comment type="similarity">
    <text evidence="1">Belongs to the universal ribosomal protein uL11 family.</text>
</comment>
<protein>
    <recommendedName>
        <fullName evidence="1">Large ribosomal subunit protein uL11</fullName>
    </recommendedName>
    <alternativeName>
        <fullName evidence="2">50S ribosomal protein L11</fullName>
    </alternativeName>
</protein>
<gene>
    <name evidence="1" type="primary">rplK</name>
    <name type="ordered locus">THA_631</name>
</gene>
<proteinExistence type="inferred from homology"/>
<name>RL11_THEAB</name>
<evidence type="ECO:0000255" key="1">
    <source>
        <dbReference type="HAMAP-Rule" id="MF_00736"/>
    </source>
</evidence>
<evidence type="ECO:0000305" key="2"/>
<dbReference type="EMBL" id="CP001185">
    <property type="protein sequence ID" value="ACJ75114.1"/>
    <property type="molecule type" value="Genomic_DNA"/>
</dbReference>
<dbReference type="RefSeq" id="WP_004104446.1">
    <property type="nucleotide sequence ID" value="NC_011653.1"/>
</dbReference>
<dbReference type="SMR" id="B7IGA0"/>
<dbReference type="STRING" id="484019.THA_631"/>
<dbReference type="KEGG" id="taf:THA_631"/>
<dbReference type="eggNOG" id="COG0080">
    <property type="taxonomic scope" value="Bacteria"/>
</dbReference>
<dbReference type="HOGENOM" id="CLU_074237_2_0_0"/>
<dbReference type="OrthoDB" id="9802408at2"/>
<dbReference type="Proteomes" id="UP000002453">
    <property type="component" value="Chromosome"/>
</dbReference>
<dbReference type="GO" id="GO:0022625">
    <property type="term" value="C:cytosolic large ribosomal subunit"/>
    <property type="evidence" value="ECO:0007669"/>
    <property type="project" value="TreeGrafter"/>
</dbReference>
<dbReference type="GO" id="GO:0070180">
    <property type="term" value="F:large ribosomal subunit rRNA binding"/>
    <property type="evidence" value="ECO:0007669"/>
    <property type="project" value="UniProtKB-UniRule"/>
</dbReference>
<dbReference type="GO" id="GO:0003735">
    <property type="term" value="F:structural constituent of ribosome"/>
    <property type="evidence" value="ECO:0007669"/>
    <property type="project" value="InterPro"/>
</dbReference>
<dbReference type="GO" id="GO:0006412">
    <property type="term" value="P:translation"/>
    <property type="evidence" value="ECO:0007669"/>
    <property type="project" value="UniProtKB-UniRule"/>
</dbReference>
<dbReference type="CDD" id="cd00349">
    <property type="entry name" value="Ribosomal_L11"/>
    <property type="match status" value="1"/>
</dbReference>
<dbReference type="FunFam" id="1.10.10.250:FF:000001">
    <property type="entry name" value="50S ribosomal protein L11"/>
    <property type="match status" value="1"/>
</dbReference>
<dbReference type="FunFam" id="3.30.1550.10:FF:000001">
    <property type="entry name" value="50S ribosomal protein L11"/>
    <property type="match status" value="1"/>
</dbReference>
<dbReference type="Gene3D" id="1.10.10.250">
    <property type="entry name" value="Ribosomal protein L11, C-terminal domain"/>
    <property type="match status" value="1"/>
</dbReference>
<dbReference type="Gene3D" id="3.30.1550.10">
    <property type="entry name" value="Ribosomal protein L11/L12, N-terminal domain"/>
    <property type="match status" value="1"/>
</dbReference>
<dbReference type="HAMAP" id="MF_00736">
    <property type="entry name" value="Ribosomal_uL11"/>
    <property type="match status" value="1"/>
</dbReference>
<dbReference type="InterPro" id="IPR000911">
    <property type="entry name" value="Ribosomal_uL11"/>
</dbReference>
<dbReference type="InterPro" id="IPR006519">
    <property type="entry name" value="Ribosomal_uL11_bac-typ"/>
</dbReference>
<dbReference type="InterPro" id="IPR020783">
    <property type="entry name" value="Ribosomal_uL11_C"/>
</dbReference>
<dbReference type="InterPro" id="IPR036769">
    <property type="entry name" value="Ribosomal_uL11_C_sf"/>
</dbReference>
<dbReference type="InterPro" id="IPR020785">
    <property type="entry name" value="Ribosomal_uL11_CS"/>
</dbReference>
<dbReference type="InterPro" id="IPR020784">
    <property type="entry name" value="Ribosomal_uL11_N"/>
</dbReference>
<dbReference type="InterPro" id="IPR036796">
    <property type="entry name" value="Ribosomal_uL11_N_sf"/>
</dbReference>
<dbReference type="NCBIfam" id="TIGR01632">
    <property type="entry name" value="L11_bact"/>
    <property type="match status" value="1"/>
</dbReference>
<dbReference type="PANTHER" id="PTHR11661">
    <property type="entry name" value="60S RIBOSOMAL PROTEIN L12"/>
    <property type="match status" value="1"/>
</dbReference>
<dbReference type="PANTHER" id="PTHR11661:SF1">
    <property type="entry name" value="LARGE RIBOSOMAL SUBUNIT PROTEIN UL11M"/>
    <property type="match status" value="1"/>
</dbReference>
<dbReference type="Pfam" id="PF00298">
    <property type="entry name" value="Ribosomal_L11"/>
    <property type="match status" value="1"/>
</dbReference>
<dbReference type="Pfam" id="PF03946">
    <property type="entry name" value="Ribosomal_L11_N"/>
    <property type="match status" value="1"/>
</dbReference>
<dbReference type="SMART" id="SM00649">
    <property type="entry name" value="RL11"/>
    <property type="match status" value="1"/>
</dbReference>
<dbReference type="SUPFAM" id="SSF54747">
    <property type="entry name" value="Ribosomal L11/L12e N-terminal domain"/>
    <property type="match status" value="1"/>
</dbReference>
<dbReference type="SUPFAM" id="SSF46906">
    <property type="entry name" value="Ribosomal protein L11, C-terminal domain"/>
    <property type="match status" value="1"/>
</dbReference>
<dbReference type="PROSITE" id="PS00359">
    <property type="entry name" value="RIBOSOMAL_L11"/>
    <property type="match status" value="1"/>
</dbReference>
<reference key="1">
    <citation type="journal article" date="2009" name="J. Bacteriol.">
        <title>The genome of Thermosipho africanus TCF52B: lateral genetic connections to the Firmicutes and Archaea.</title>
        <authorList>
            <person name="Nesboe C.L."/>
            <person name="Bapteste E."/>
            <person name="Curtis B."/>
            <person name="Dahle H."/>
            <person name="Lopez P."/>
            <person name="Macleod D."/>
            <person name="Dlutek M."/>
            <person name="Bowman S."/>
            <person name="Zhaxybayeva O."/>
            <person name="Birkeland N.-K."/>
            <person name="Doolittle W.F."/>
        </authorList>
    </citation>
    <scope>NUCLEOTIDE SEQUENCE [LARGE SCALE GENOMIC DNA]</scope>
    <source>
        <strain>TCF52B</strain>
    </source>
</reference>
<keyword id="KW-0488">Methylation</keyword>
<keyword id="KW-1185">Reference proteome</keyword>
<keyword id="KW-0687">Ribonucleoprotein</keyword>
<keyword id="KW-0689">Ribosomal protein</keyword>
<keyword id="KW-0694">RNA-binding</keyword>
<keyword id="KW-0699">rRNA-binding</keyword>
<accession>B7IGA0</accession>